<feature type="chain" id="PRO_0000147798" description="Probable phosphoglucomutase, cytoplasmic 1">
    <location>
        <begin position="1"/>
        <end position="583"/>
    </location>
</feature>
<feature type="active site" description="Phosphoserine intermediate" evidence="1">
    <location>
        <position position="123"/>
    </location>
</feature>
<feature type="binding site" evidence="1">
    <location>
        <position position="24"/>
    </location>
    <ligand>
        <name>alpha-D-glucose 1,6-bisphosphate</name>
        <dbReference type="ChEBI" id="CHEBI:58392"/>
    </ligand>
</feature>
<feature type="binding site" evidence="1">
    <location>
        <position position="123"/>
    </location>
    <ligand>
        <name>alpha-D-glucose 1,6-bisphosphate</name>
        <dbReference type="ChEBI" id="CHEBI:58392"/>
    </ligand>
</feature>
<feature type="binding site" description="via phosphate group" evidence="1">
    <location>
        <position position="123"/>
    </location>
    <ligand>
        <name>Mg(2+)</name>
        <dbReference type="ChEBI" id="CHEBI:18420"/>
    </ligand>
</feature>
<feature type="binding site" evidence="1">
    <location>
        <position position="299"/>
    </location>
    <ligand>
        <name>Mg(2+)</name>
        <dbReference type="ChEBI" id="CHEBI:18420"/>
    </ligand>
</feature>
<feature type="binding site" evidence="1">
    <location>
        <position position="301"/>
    </location>
    <ligand>
        <name>Mg(2+)</name>
        <dbReference type="ChEBI" id="CHEBI:18420"/>
    </ligand>
</feature>
<feature type="binding site" evidence="1">
    <location>
        <position position="303"/>
    </location>
    <ligand>
        <name>alpha-D-glucose 1,6-bisphosphate</name>
        <dbReference type="ChEBI" id="CHEBI:58392"/>
    </ligand>
</feature>
<feature type="binding site" evidence="1">
    <location>
        <position position="303"/>
    </location>
    <ligand>
        <name>Mg(2+)</name>
        <dbReference type="ChEBI" id="CHEBI:18420"/>
    </ligand>
</feature>
<feature type="binding site" evidence="1">
    <location>
        <position position="304"/>
    </location>
    <ligand>
        <name>alpha-D-glucose 1,6-bisphosphate</name>
        <dbReference type="ChEBI" id="CHEBI:58392"/>
    </ligand>
</feature>
<feature type="binding site" evidence="1">
    <location>
        <position position="367"/>
    </location>
    <ligand>
        <name>alpha-D-glucose 1,6-bisphosphate</name>
        <dbReference type="ChEBI" id="CHEBI:58392"/>
    </ligand>
</feature>
<feature type="binding site" evidence="1">
    <location>
        <position position="386"/>
    </location>
    <ligand>
        <name>alpha-D-glucose 1,6-bisphosphate</name>
        <dbReference type="ChEBI" id="CHEBI:58392"/>
    </ligand>
</feature>
<feature type="binding site" evidence="1">
    <location>
        <position position="388"/>
    </location>
    <ligand>
        <name>alpha-D-glucose 1,6-bisphosphate</name>
        <dbReference type="ChEBI" id="CHEBI:58392"/>
    </ligand>
</feature>
<feature type="binding site" evidence="1">
    <location>
        <position position="399"/>
    </location>
    <ligand>
        <name>alpha-D-glucose 1,6-bisphosphate</name>
        <dbReference type="ChEBI" id="CHEBI:58392"/>
    </ligand>
</feature>
<feature type="modified residue" description="Phosphoserine" evidence="1">
    <location>
        <position position="123"/>
    </location>
</feature>
<reference key="1">
    <citation type="journal article" date="2000" name="Nature">
        <title>Sequence and analysis of chromosome 1 of the plant Arabidopsis thaliana.</title>
        <authorList>
            <person name="Theologis A."/>
            <person name="Ecker J.R."/>
            <person name="Palm C.J."/>
            <person name="Federspiel N.A."/>
            <person name="Kaul S."/>
            <person name="White O."/>
            <person name="Alonso J."/>
            <person name="Altafi H."/>
            <person name="Araujo R."/>
            <person name="Bowman C.L."/>
            <person name="Brooks S.Y."/>
            <person name="Buehler E."/>
            <person name="Chan A."/>
            <person name="Chao Q."/>
            <person name="Chen H."/>
            <person name="Cheuk R.F."/>
            <person name="Chin C.W."/>
            <person name="Chung M.K."/>
            <person name="Conn L."/>
            <person name="Conway A.B."/>
            <person name="Conway A.R."/>
            <person name="Creasy T.H."/>
            <person name="Dewar K."/>
            <person name="Dunn P."/>
            <person name="Etgu P."/>
            <person name="Feldblyum T.V."/>
            <person name="Feng J.-D."/>
            <person name="Fong B."/>
            <person name="Fujii C.Y."/>
            <person name="Gill J.E."/>
            <person name="Goldsmith A.D."/>
            <person name="Haas B."/>
            <person name="Hansen N.F."/>
            <person name="Hughes B."/>
            <person name="Huizar L."/>
            <person name="Hunter J.L."/>
            <person name="Jenkins J."/>
            <person name="Johnson-Hopson C."/>
            <person name="Khan S."/>
            <person name="Khaykin E."/>
            <person name="Kim C.J."/>
            <person name="Koo H.L."/>
            <person name="Kremenetskaia I."/>
            <person name="Kurtz D.B."/>
            <person name="Kwan A."/>
            <person name="Lam B."/>
            <person name="Langin-Hooper S."/>
            <person name="Lee A."/>
            <person name="Lee J.M."/>
            <person name="Lenz C.A."/>
            <person name="Li J.H."/>
            <person name="Li Y.-P."/>
            <person name="Lin X."/>
            <person name="Liu S.X."/>
            <person name="Liu Z.A."/>
            <person name="Luros J.S."/>
            <person name="Maiti R."/>
            <person name="Marziali A."/>
            <person name="Militscher J."/>
            <person name="Miranda M."/>
            <person name="Nguyen M."/>
            <person name="Nierman W.C."/>
            <person name="Osborne B.I."/>
            <person name="Pai G."/>
            <person name="Peterson J."/>
            <person name="Pham P.K."/>
            <person name="Rizzo M."/>
            <person name="Rooney T."/>
            <person name="Rowley D."/>
            <person name="Sakano H."/>
            <person name="Salzberg S.L."/>
            <person name="Schwartz J.R."/>
            <person name="Shinn P."/>
            <person name="Southwick A.M."/>
            <person name="Sun H."/>
            <person name="Tallon L.J."/>
            <person name="Tambunga G."/>
            <person name="Toriumi M.J."/>
            <person name="Town C.D."/>
            <person name="Utterback T."/>
            <person name="Van Aken S."/>
            <person name="Vaysberg M."/>
            <person name="Vysotskaia V.S."/>
            <person name="Walker M."/>
            <person name="Wu D."/>
            <person name="Yu G."/>
            <person name="Fraser C.M."/>
            <person name="Venter J.C."/>
            <person name="Davis R.W."/>
        </authorList>
    </citation>
    <scope>NUCLEOTIDE SEQUENCE [LARGE SCALE GENOMIC DNA]</scope>
    <source>
        <strain>cv. Columbia</strain>
    </source>
</reference>
<reference key="2">
    <citation type="journal article" date="2017" name="Plant J.">
        <title>Araport11: a complete reannotation of the Arabidopsis thaliana reference genome.</title>
        <authorList>
            <person name="Cheng C.Y."/>
            <person name="Krishnakumar V."/>
            <person name="Chan A.P."/>
            <person name="Thibaud-Nissen F."/>
            <person name="Schobel S."/>
            <person name="Town C.D."/>
        </authorList>
    </citation>
    <scope>GENOME REANNOTATION</scope>
    <source>
        <strain>cv. Columbia</strain>
    </source>
</reference>
<reference key="3">
    <citation type="journal article" date="2003" name="Science">
        <title>Empirical analysis of transcriptional activity in the Arabidopsis genome.</title>
        <authorList>
            <person name="Yamada K."/>
            <person name="Lim J."/>
            <person name="Dale J.M."/>
            <person name="Chen H."/>
            <person name="Shinn P."/>
            <person name="Palm C.J."/>
            <person name="Southwick A.M."/>
            <person name="Wu H.C."/>
            <person name="Kim C.J."/>
            <person name="Nguyen M."/>
            <person name="Pham P.K."/>
            <person name="Cheuk R.F."/>
            <person name="Karlin-Newmann G."/>
            <person name="Liu S.X."/>
            <person name="Lam B."/>
            <person name="Sakano H."/>
            <person name="Wu T."/>
            <person name="Yu G."/>
            <person name="Miranda M."/>
            <person name="Quach H.L."/>
            <person name="Tripp M."/>
            <person name="Chang C.H."/>
            <person name="Lee J.M."/>
            <person name="Toriumi M.J."/>
            <person name="Chan M.M."/>
            <person name="Tang C.C."/>
            <person name="Onodera C.S."/>
            <person name="Deng J.M."/>
            <person name="Akiyama K."/>
            <person name="Ansari Y."/>
            <person name="Arakawa T."/>
            <person name="Banh J."/>
            <person name="Banno F."/>
            <person name="Bowser L."/>
            <person name="Brooks S.Y."/>
            <person name="Carninci P."/>
            <person name="Chao Q."/>
            <person name="Choy N."/>
            <person name="Enju A."/>
            <person name="Goldsmith A.D."/>
            <person name="Gurjal M."/>
            <person name="Hansen N.F."/>
            <person name="Hayashizaki Y."/>
            <person name="Johnson-Hopson C."/>
            <person name="Hsuan V.W."/>
            <person name="Iida K."/>
            <person name="Karnes M."/>
            <person name="Khan S."/>
            <person name="Koesema E."/>
            <person name="Ishida J."/>
            <person name="Jiang P.X."/>
            <person name="Jones T."/>
            <person name="Kawai J."/>
            <person name="Kamiya A."/>
            <person name="Meyers C."/>
            <person name="Nakajima M."/>
            <person name="Narusaka M."/>
            <person name="Seki M."/>
            <person name="Sakurai T."/>
            <person name="Satou M."/>
            <person name="Tamse R."/>
            <person name="Vaysberg M."/>
            <person name="Wallender E.K."/>
            <person name="Wong C."/>
            <person name="Yamamura Y."/>
            <person name="Yuan S."/>
            <person name="Shinozaki K."/>
            <person name="Davis R.W."/>
            <person name="Theologis A."/>
            <person name="Ecker J.R."/>
        </authorList>
    </citation>
    <scope>NUCLEOTIDE SEQUENCE [LARGE SCALE MRNA]</scope>
    <source>
        <strain>cv. Columbia</strain>
    </source>
</reference>
<sequence length="583" mass="63171">MVFKVSTVSTSPIDGQKPGTSGLRKKVKVFKQPNYLENFVQATFNALTAEKVKGATLVVSGDGRYYSKDAVQIIIKMAAANGVRRVWVGKNTLLSTPAVSAVIRERSGADGSKATGAFILTASHNPGGPTEDFGIKYNMENGGPAPESITDKIYENTKTIKEYPIAQDLPNVDISAVGVTSFEGPEGKFDVEVFDPADDYVKLMKSIFDFEAIRKLLSSPKFTFCYDALHGVAGAYAHRIFVEELGAQESALLNCTPKEDFGGGHPDPNLTYAKELVARMGLGKSDTGGEPPEFGAAADGDADRNMILGKRFFVTPSDSVAIIAANAIGAIPYFSSGLKGVARSMPTSAALDVVAKSLNLKFFEVPTGWKFFGNLMDAGMCSVCGEESFGTGSDHIREKDGIWAVLAWMSILAHKNKGNIDGNAKLVSVEDIVRQHWATYGRHYYTRYDYENVDAGKAKELMEHLVKLQSSIPEVNKIVKGIRSDVASVASADEFEYKDPVDGSISKHQGIRYLFEDGSRLVFRLSGTGSEGATIRLYIEQYEKDASKTGRESQEALSPLVDLALKLSKMEEFTGRSAPTVIT</sequence>
<name>PGMC1_ARATH</name>
<evidence type="ECO:0000250" key="1">
    <source>
        <dbReference type="UniProtKB" id="P00949"/>
    </source>
</evidence>
<evidence type="ECO:0000250" key="2">
    <source>
        <dbReference type="UniProtKB" id="P36871"/>
    </source>
</evidence>
<evidence type="ECO:0000250" key="3">
    <source>
        <dbReference type="UniProtKB" id="P93804"/>
    </source>
</evidence>
<evidence type="ECO:0000305" key="4"/>
<evidence type="ECO:0000312" key="5">
    <source>
        <dbReference type="Araport" id="AT1G23190"/>
    </source>
</evidence>
<evidence type="ECO:0000312" key="6">
    <source>
        <dbReference type="EMBL" id="AAC00601.1"/>
    </source>
</evidence>
<evidence type="ECO:0000312" key="7">
    <source>
        <dbReference type="EMBL" id="AAF86992.1"/>
    </source>
</evidence>
<keyword id="KW-0119">Carbohydrate metabolism</keyword>
<keyword id="KW-0963">Cytoplasm</keyword>
<keyword id="KW-0313">Glucose metabolism</keyword>
<keyword id="KW-0413">Isomerase</keyword>
<keyword id="KW-0460">Magnesium</keyword>
<keyword id="KW-0479">Metal-binding</keyword>
<keyword id="KW-0597">Phosphoprotein</keyword>
<keyword id="KW-1185">Reference proteome</keyword>
<comment type="function">
    <text evidence="2 3">Catalyzes the reversible isomerization of alpha-D-glucose 1-phosphate to alpha-D-glucose 6-phosphate (By similarity). The mechanism proceeds via the intermediate compound alpha-D-glucose 1,6-bisphosphate (By similarity). This enzyme participates in both the breakdown and synthesis of glucose (By similarity).</text>
</comment>
<comment type="catalytic activity">
    <reaction evidence="3">
        <text>alpha-D-glucose 1-phosphate = alpha-D-glucose 6-phosphate</text>
        <dbReference type="Rhea" id="RHEA:23536"/>
        <dbReference type="ChEBI" id="CHEBI:58225"/>
        <dbReference type="ChEBI" id="CHEBI:58601"/>
        <dbReference type="EC" id="5.4.2.2"/>
    </reaction>
</comment>
<comment type="catalytic activity">
    <reaction evidence="3">
        <text>O-phospho-L-seryl-[protein] + alpha-D-glucose 1-phosphate = alpha-D-glucose 1,6-bisphosphate + L-seryl-[protein]</text>
        <dbReference type="Rhea" id="RHEA:68748"/>
        <dbReference type="Rhea" id="RHEA-COMP:9863"/>
        <dbReference type="Rhea" id="RHEA-COMP:11604"/>
        <dbReference type="ChEBI" id="CHEBI:29999"/>
        <dbReference type="ChEBI" id="CHEBI:58392"/>
        <dbReference type="ChEBI" id="CHEBI:58601"/>
        <dbReference type="ChEBI" id="CHEBI:83421"/>
    </reaction>
</comment>
<comment type="catalytic activity">
    <reaction evidence="3">
        <text>alpha-D-glucose 1,6-bisphosphate + L-seryl-[protein] = O-phospho-L-seryl-[protein] + alpha-D-glucose 6-phosphate</text>
        <dbReference type="Rhea" id="RHEA:68752"/>
        <dbReference type="Rhea" id="RHEA-COMP:9863"/>
        <dbReference type="Rhea" id="RHEA-COMP:11604"/>
        <dbReference type="ChEBI" id="CHEBI:29999"/>
        <dbReference type="ChEBI" id="CHEBI:58225"/>
        <dbReference type="ChEBI" id="CHEBI:58392"/>
        <dbReference type="ChEBI" id="CHEBI:83421"/>
    </reaction>
</comment>
<comment type="cofactor">
    <cofactor evidence="1">
        <name>Mg(2+)</name>
        <dbReference type="ChEBI" id="CHEBI:18420"/>
    </cofactor>
    <text evidence="1">Binds 1 Mg(2+) ion per subunit.</text>
</comment>
<comment type="subunit">
    <text evidence="1">Monomer.</text>
</comment>
<comment type="subcellular location">
    <subcellularLocation>
        <location evidence="3">Cytoplasm</location>
    </subcellularLocation>
</comment>
<comment type="similarity">
    <text evidence="4">Belongs to the phosphohexose mutase family.</text>
</comment>
<comment type="sequence caution" evidence="4">
    <conflict type="erroneous gene model prediction">
        <sequence resource="EMBL-CDS" id="AAC00601"/>
    </conflict>
</comment>
<comment type="sequence caution" evidence="4">
    <conflict type="erroneous gene model prediction">
        <sequence resource="EMBL-CDS" id="AAF86992"/>
    </conflict>
</comment>
<organism>
    <name type="scientific">Arabidopsis thaliana</name>
    <name type="common">Mouse-ear cress</name>
    <dbReference type="NCBI Taxonomy" id="3702"/>
    <lineage>
        <taxon>Eukaryota</taxon>
        <taxon>Viridiplantae</taxon>
        <taxon>Streptophyta</taxon>
        <taxon>Embryophyta</taxon>
        <taxon>Tracheophyta</taxon>
        <taxon>Spermatophyta</taxon>
        <taxon>Magnoliopsida</taxon>
        <taxon>eudicotyledons</taxon>
        <taxon>Gunneridae</taxon>
        <taxon>Pentapetalae</taxon>
        <taxon>rosids</taxon>
        <taxon>malvids</taxon>
        <taxon>Brassicales</taxon>
        <taxon>Brassicaceae</taxon>
        <taxon>Camelineae</taxon>
        <taxon>Arabidopsis</taxon>
    </lineage>
</organism>
<proteinExistence type="evidence at transcript level"/>
<gene>
    <name evidence="5" type="ordered locus">At1g23190</name>
    <name evidence="7" type="ORF">F26F24.1</name>
    <name evidence="6" type="ORF">T26J12.5</name>
</gene>
<protein>
    <recommendedName>
        <fullName>Probable phosphoglucomutase, cytoplasmic 1</fullName>
        <shortName>PGM 1</shortName>
        <ecNumber evidence="3">5.4.2.2</ecNumber>
    </recommendedName>
    <alternativeName>
        <fullName>Glucose phosphomutase 1</fullName>
    </alternativeName>
</protein>
<dbReference type="EC" id="5.4.2.2" evidence="3"/>
<dbReference type="EMBL" id="AC002311">
    <property type="protein sequence ID" value="AAC00601.1"/>
    <property type="status" value="ALT_SEQ"/>
    <property type="molecule type" value="Genomic_DNA"/>
</dbReference>
<dbReference type="EMBL" id="AC005292">
    <property type="protein sequence ID" value="AAF86992.1"/>
    <property type="status" value="ALT_SEQ"/>
    <property type="molecule type" value="Genomic_DNA"/>
</dbReference>
<dbReference type="EMBL" id="CP002684">
    <property type="protein sequence ID" value="AEE30353.1"/>
    <property type="molecule type" value="Genomic_DNA"/>
</dbReference>
<dbReference type="EMBL" id="AY059926">
    <property type="protein sequence ID" value="AAL24408.1"/>
    <property type="molecule type" value="mRNA"/>
</dbReference>
<dbReference type="EMBL" id="AY081589">
    <property type="protein sequence ID" value="AAM10151.1"/>
    <property type="molecule type" value="mRNA"/>
</dbReference>
<dbReference type="PIR" id="B86366">
    <property type="entry name" value="B86366"/>
</dbReference>
<dbReference type="RefSeq" id="NP_173732.1">
    <property type="nucleotide sequence ID" value="NM_102167.4"/>
</dbReference>
<dbReference type="SMR" id="O49299"/>
<dbReference type="BioGRID" id="24166">
    <property type="interactions" value="31"/>
</dbReference>
<dbReference type="FunCoup" id="O49299">
    <property type="interactions" value="2654"/>
</dbReference>
<dbReference type="IntAct" id="O49299">
    <property type="interactions" value="3"/>
</dbReference>
<dbReference type="STRING" id="3702.O49299"/>
<dbReference type="GlyGen" id="O49299">
    <property type="glycosylation" value="2 sites"/>
</dbReference>
<dbReference type="iPTMnet" id="O49299"/>
<dbReference type="MetOSite" id="O49299"/>
<dbReference type="PaxDb" id="3702-AT1G23190.1"/>
<dbReference type="ProteomicsDB" id="236152"/>
<dbReference type="EnsemblPlants" id="AT1G23190.1">
    <property type="protein sequence ID" value="AT1G23190.1"/>
    <property type="gene ID" value="AT1G23190"/>
</dbReference>
<dbReference type="GeneID" id="838927"/>
<dbReference type="Gramene" id="AT1G23190.1">
    <property type="protein sequence ID" value="AT1G23190.1"/>
    <property type="gene ID" value="AT1G23190"/>
</dbReference>
<dbReference type="KEGG" id="ath:AT1G23190"/>
<dbReference type="Araport" id="AT1G23190"/>
<dbReference type="TAIR" id="AT1G23190">
    <property type="gene designation" value="PGM3"/>
</dbReference>
<dbReference type="eggNOG" id="KOG0625">
    <property type="taxonomic scope" value="Eukaryota"/>
</dbReference>
<dbReference type="HOGENOM" id="CLU_009330_0_1_1"/>
<dbReference type="InParanoid" id="O49299"/>
<dbReference type="OMA" id="WRDPLFG"/>
<dbReference type="PhylomeDB" id="O49299"/>
<dbReference type="BRENDA" id="5.4.2.2">
    <property type="organism ID" value="399"/>
</dbReference>
<dbReference type="CD-CODE" id="4299E36E">
    <property type="entry name" value="Nucleolus"/>
</dbReference>
<dbReference type="PRO" id="PR:O49299"/>
<dbReference type="Proteomes" id="UP000006548">
    <property type="component" value="Chromosome 1"/>
</dbReference>
<dbReference type="ExpressionAtlas" id="O49299">
    <property type="expression patterns" value="baseline and differential"/>
</dbReference>
<dbReference type="GO" id="GO:0005737">
    <property type="term" value="C:cytoplasm"/>
    <property type="evidence" value="ECO:0007005"/>
    <property type="project" value="TAIR"/>
</dbReference>
<dbReference type="GO" id="GO:0005829">
    <property type="term" value="C:cytosol"/>
    <property type="evidence" value="ECO:0000314"/>
    <property type="project" value="TAIR"/>
</dbReference>
<dbReference type="GO" id="GO:0005634">
    <property type="term" value="C:nucleus"/>
    <property type="evidence" value="ECO:0007005"/>
    <property type="project" value="TAIR"/>
</dbReference>
<dbReference type="GO" id="GO:0005886">
    <property type="term" value="C:plasma membrane"/>
    <property type="evidence" value="ECO:0007005"/>
    <property type="project" value="TAIR"/>
</dbReference>
<dbReference type="GO" id="GO:0000287">
    <property type="term" value="F:magnesium ion binding"/>
    <property type="evidence" value="ECO:0007669"/>
    <property type="project" value="InterPro"/>
</dbReference>
<dbReference type="GO" id="GO:0004614">
    <property type="term" value="F:phosphoglucomutase activity"/>
    <property type="evidence" value="ECO:0000314"/>
    <property type="project" value="TAIR"/>
</dbReference>
<dbReference type="GO" id="GO:0005975">
    <property type="term" value="P:carbohydrate metabolic process"/>
    <property type="evidence" value="ECO:0000314"/>
    <property type="project" value="TAIR"/>
</dbReference>
<dbReference type="GO" id="GO:0006006">
    <property type="term" value="P:glucose metabolic process"/>
    <property type="evidence" value="ECO:0007669"/>
    <property type="project" value="UniProtKB-KW"/>
</dbReference>
<dbReference type="GO" id="GO:0046686">
    <property type="term" value="P:response to cadmium ion"/>
    <property type="evidence" value="ECO:0000270"/>
    <property type="project" value="TAIR"/>
</dbReference>
<dbReference type="CDD" id="cd03085">
    <property type="entry name" value="PGM1"/>
    <property type="match status" value="1"/>
</dbReference>
<dbReference type="FunFam" id="3.30.310.50:FF:000002">
    <property type="entry name" value="Phosphoglucomutase 5"/>
    <property type="match status" value="1"/>
</dbReference>
<dbReference type="FunFam" id="3.40.120.10:FF:000004">
    <property type="entry name" value="Phosphoglucomutase 5"/>
    <property type="match status" value="1"/>
</dbReference>
<dbReference type="FunFam" id="3.40.120.10:FF:000005">
    <property type="entry name" value="Phosphoglucomutase 5"/>
    <property type="match status" value="1"/>
</dbReference>
<dbReference type="FunFam" id="3.40.120.10:FF:000009">
    <property type="entry name" value="Phosphoglucomutase, cytoplasmic 1"/>
    <property type="match status" value="1"/>
</dbReference>
<dbReference type="Gene3D" id="3.40.120.10">
    <property type="entry name" value="Alpha-D-Glucose-1,6-Bisphosphate, subunit A, domain 3"/>
    <property type="match status" value="3"/>
</dbReference>
<dbReference type="Gene3D" id="3.30.310.50">
    <property type="entry name" value="Alpha-D-phosphohexomutase, C-terminal domain"/>
    <property type="match status" value="1"/>
</dbReference>
<dbReference type="InterPro" id="IPR005844">
    <property type="entry name" value="A-D-PHexomutase_a/b/a-I"/>
</dbReference>
<dbReference type="InterPro" id="IPR016055">
    <property type="entry name" value="A-D-PHexomutase_a/b/a-I/II/III"/>
</dbReference>
<dbReference type="InterPro" id="IPR005845">
    <property type="entry name" value="A-D-PHexomutase_a/b/a-II"/>
</dbReference>
<dbReference type="InterPro" id="IPR005846">
    <property type="entry name" value="A-D-PHexomutase_a/b/a-III"/>
</dbReference>
<dbReference type="InterPro" id="IPR036900">
    <property type="entry name" value="A-D-PHexomutase_C_sf"/>
</dbReference>
<dbReference type="InterPro" id="IPR016066">
    <property type="entry name" value="A-D-PHexomutase_CS"/>
</dbReference>
<dbReference type="InterPro" id="IPR005841">
    <property type="entry name" value="Alpha-D-phosphohexomutase_SF"/>
</dbReference>
<dbReference type="InterPro" id="IPR045244">
    <property type="entry name" value="PGM"/>
</dbReference>
<dbReference type="NCBIfam" id="NF005737">
    <property type="entry name" value="PRK07564.1-1"/>
    <property type="match status" value="1"/>
</dbReference>
<dbReference type="PANTHER" id="PTHR22573:SF2">
    <property type="entry name" value="PHOSPHOGLUCOMUTASE"/>
    <property type="match status" value="1"/>
</dbReference>
<dbReference type="PANTHER" id="PTHR22573">
    <property type="entry name" value="PHOSPHOHEXOMUTASE FAMILY MEMBER"/>
    <property type="match status" value="1"/>
</dbReference>
<dbReference type="Pfam" id="PF24947">
    <property type="entry name" value="PGM1_C_vert_fung"/>
    <property type="match status" value="1"/>
</dbReference>
<dbReference type="Pfam" id="PF02878">
    <property type="entry name" value="PGM_PMM_I"/>
    <property type="match status" value="1"/>
</dbReference>
<dbReference type="Pfam" id="PF02879">
    <property type="entry name" value="PGM_PMM_II"/>
    <property type="match status" value="1"/>
</dbReference>
<dbReference type="Pfam" id="PF02880">
    <property type="entry name" value="PGM_PMM_III"/>
    <property type="match status" value="1"/>
</dbReference>
<dbReference type="PRINTS" id="PR00509">
    <property type="entry name" value="PGMPMM"/>
</dbReference>
<dbReference type="SUPFAM" id="SSF55957">
    <property type="entry name" value="Phosphoglucomutase, C-terminal domain"/>
    <property type="match status" value="1"/>
</dbReference>
<dbReference type="SUPFAM" id="SSF53738">
    <property type="entry name" value="Phosphoglucomutase, first 3 domains"/>
    <property type="match status" value="3"/>
</dbReference>
<dbReference type="PROSITE" id="PS00710">
    <property type="entry name" value="PGM_PMM"/>
    <property type="match status" value="1"/>
</dbReference>
<accession>O49299</accession>
<accession>Q93Y04</accession>
<accession>Q9LR42</accession>